<reference key="1">
    <citation type="journal article" date="2006" name="J. Bacteriol.">
        <title>Chromosome rearrangement and diversification of Francisella tularensis revealed by the type B (OSU18) genome sequence.</title>
        <authorList>
            <person name="Petrosino J.F."/>
            <person name="Xiang Q."/>
            <person name="Karpathy S.E."/>
            <person name="Jiang H."/>
            <person name="Yerrapragada S."/>
            <person name="Liu Y."/>
            <person name="Gioia J."/>
            <person name="Hemphill L."/>
            <person name="Gonzalez A."/>
            <person name="Raghavan T.M."/>
            <person name="Uzman A."/>
            <person name="Fox G.E."/>
            <person name="Highlander S."/>
            <person name="Reichard M."/>
            <person name="Morton R.J."/>
            <person name="Clinkenbeard K.D."/>
            <person name="Weinstock G.M."/>
        </authorList>
    </citation>
    <scope>NUCLEOTIDE SEQUENCE [LARGE SCALE GENOMIC DNA]</scope>
    <source>
        <strain>OSU18</strain>
    </source>
</reference>
<organism>
    <name type="scientific">Francisella tularensis subsp. holarctica (strain OSU18)</name>
    <dbReference type="NCBI Taxonomy" id="393011"/>
    <lineage>
        <taxon>Bacteria</taxon>
        <taxon>Pseudomonadati</taxon>
        <taxon>Pseudomonadota</taxon>
        <taxon>Gammaproteobacteria</taxon>
        <taxon>Thiotrichales</taxon>
        <taxon>Francisellaceae</taxon>
        <taxon>Francisella</taxon>
    </lineage>
</organism>
<evidence type="ECO:0000255" key="1">
    <source>
        <dbReference type="HAMAP-Rule" id="MF_00004"/>
    </source>
</evidence>
<comment type="function">
    <text evidence="1">Catalyzes a salvage reaction resulting in the formation of AMP, that is energically less costly than de novo synthesis.</text>
</comment>
<comment type="catalytic activity">
    <reaction evidence="1">
        <text>AMP + diphosphate = 5-phospho-alpha-D-ribose 1-diphosphate + adenine</text>
        <dbReference type="Rhea" id="RHEA:16609"/>
        <dbReference type="ChEBI" id="CHEBI:16708"/>
        <dbReference type="ChEBI" id="CHEBI:33019"/>
        <dbReference type="ChEBI" id="CHEBI:58017"/>
        <dbReference type="ChEBI" id="CHEBI:456215"/>
        <dbReference type="EC" id="2.4.2.7"/>
    </reaction>
</comment>
<comment type="pathway">
    <text evidence="1">Purine metabolism; AMP biosynthesis via salvage pathway; AMP from adenine: step 1/1.</text>
</comment>
<comment type="subunit">
    <text evidence="1">Homodimer.</text>
</comment>
<comment type="subcellular location">
    <subcellularLocation>
        <location evidence="1">Cytoplasm</location>
    </subcellularLocation>
</comment>
<comment type="similarity">
    <text evidence="1">Belongs to the purine/pyrimidine phosphoribosyltransferase family.</text>
</comment>
<gene>
    <name evidence="1" type="primary">apt</name>
    <name type="ordered locus">FTH_1718</name>
</gene>
<keyword id="KW-0963">Cytoplasm</keyword>
<keyword id="KW-0328">Glycosyltransferase</keyword>
<keyword id="KW-0660">Purine salvage</keyword>
<keyword id="KW-0808">Transferase</keyword>
<proteinExistence type="inferred from homology"/>
<dbReference type="EC" id="2.4.2.7" evidence="1"/>
<dbReference type="EMBL" id="CP000437">
    <property type="protein sequence ID" value="ABI83486.1"/>
    <property type="molecule type" value="Genomic_DNA"/>
</dbReference>
<dbReference type="RefSeq" id="WP_003017312.1">
    <property type="nucleotide sequence ID" value="NC_017463.1"/>
</dbReference>
<dbReference type="SMR" id="Q0BK98"/>
<dbReference type="KEGG" id="fth:FTH_1718"/>
<dbReference type="UniPathway" id="UPA00588">
    <property type="reaction ID" value="UER00646"/>
</dbReference>
<dbReference type="GO" id="GO:0005737">
    <property type="term" value="C:cytoplasm"/>
    <property type="evidence" value="ECO:0007669"/>
    <property type="project" value="UniProtKB-SubCell"/>
</dbReference>
<dbReference type="GO" id="GO:0002055">
    <property type="term" value="F:adenine binding"/>
    <property type="evidence" value="ECO:0007669"/>
    <property type="project" value="TreeGrafter"/>
</dbReference>
<dbReference type="GO" id="GO:0003999">
    <property type="term" value="F:adenine phosphoribosyltransferase activity"/>
    <property type="evidence" value="ECO:0007669"/>
    <property type="project" value="UniProtKB-UniRule"/>
</dbReference>
<dbReference type="GO" id="GO:0016208">
    <property type="term" value="F:AMP binding"/>
    <property type="evidence" value="ECO:0007669"/>
    <property type="project" value="TreeGrafter"/>
</dbReference>
<dbReference type="GO" id="GO:0006168">
    <property type="term" value="P:adenine salvage"/>
    <property type="evidence" value="ECO:0007669"/>
    <property type="project" value="InterPro"/>
</dbReference>
<dbReference type="GO" id="GO:0044209">
    <property type="term" value="P:AMP salvage"/>
    <property type="evidence" value="ECO:0007669"/>
    <property type="project" value="UniProtKB-UniRule"/>
</dbReference>
<dbReference type="GO" id="GO:0006166">
    <property type="term" value="P:purine ribonucleoside salvage"/>
    <property type="evidence" value="ECO:0007669"/>
    <property type="project" value="UniProtKB-KW"/>
</dbReference>
<dbReference type="CDD" id="cd06223">
    <property type="entry name" value="PRTases_typeI"/>
    <property type="match status" value="1"/>
</dbReference>
<dbReference type="FunFam" id="3.40.50.2020:FF:000004">
    <property type="entry name" value="Adenine phosphoribosyltransferase"/>
    <property type="match status" value="1"/>
</dbReference>
<dbReference type="Gene3D" id="3.40.50.2020">
    <property type="match status" value="1"/>
</dbReference>
<dbReference type="HAMAP" id="MF_00004">
    <property type="entry name" value="Aden_phosphoribosyltr"/>
    <property type="match status" value="1"/>
</dbReference>
<dbReference type="InterPro" id="IPR005764">
    <property type="entry name" value="Ade_phspho_trans"/>
</dbReference>
<dbReference type="InterPro" id="IPR000836">
    <property type="entry name" value="PRibTrfase_dom"/>
</dbReference>
<dbReference type="InterPro" id="IPR029057">
    <property type="entry name" value="PRTase-like"/>
</dbReference>
<dbReference type="InterPro" id="IPR050054">
    <property type="entry name" value="UPRTase/APRTase"/>
</dbReference>
<dbReference type="NCBIfam" id="TIGR01090">
    <property type="entry name" value="apt"/>
    <property type="match status" value="1"/>
</dbReference>
<dbReference type="NCBIfam" id="NF002634">
    <property type="entry name" value="PRK02304.1-3"/>
    <property type="match status" value="1"/>
</dbReference>
<dbReference type="NCBIfam" id="NF002636">
    <property type="entry name" value="PRK02304.1-5"/>
    <property type="match status" value="1"/>
</dbReference>
<dbReference type="PANTHER" id="PTHR32315">
    <property type="entry name" value="ADENINE PHOSPHORIBOSYLTRANSFERASE"/>
    <property type="match status" value="1"/>
</dbReference>
<dbReference type="PANTHER" id="PTHR32315:SF3">
    <property type="entry name" value="ADENINE PHOSPHORIBOSYLTRANSFERASE"/>
    <property type="match status" value="1"/>
</dbReference>
<dbReference type="Pfam" id="PF00156">
    <property type="entry name" value="Pribosyltran"/>
    <property type="match status" value="1"/>
</dbReference>
<dbReference type="SUPFAM" id="SSF53271">
    <property type="entry name" value="PRTase-like"/>
    <property type="match status" value="1"/>
</dbReference>
<dbReference type="PROSITE" id="PS00103">
    <property type="entry name" value="PUR_PYR_PR_TRANSFER"/>
    <property type="match status" value="1"/>
</dbReference>
<name>APT_FRATO</name>
<sequence length="175" mass="18839">MNLDFIKSKIAAVPDFPKPGIMFRDITPLLADPQGLRKTAEAMAQELKNKGIQPTIIAGTESRGFIFGVALAEVLGLGFVPVRKPGKLPRATYSVKYDLEYGSDSLEIHQDAFKVTDEVLVVDDLLATGGTAKATVDLIEKTQAKVAGLIFVMELDSLGGREVLAGYNVSALIKF</sequence>
<protein>
    <recommendedName>
        <fullName evidence="1">Adenine phosphoribosyltransferase</fullName>
        <shortName evidence="1">APRT</shortName>
        <ecNumber evidence="1">2.4.2.7</ecNumber>
    </recommendedName>
</protein>
<feature type="chain" id="PRO_1000000286" description="Adenine phosphoribosyltransferase">
    <location>
        <begin position="1"/>
        <end position="175"/>
    </location>
</feature>
<accession>Q0BK98</accession>